<organism>
    <name type="scientific">Bos taurus</name>
    <name type="common">Bovine</name>
    <dbReference type="NCBI Taxonomy" id="9913"/>
    <lineage>
        <taxon>Eukaryota</taxon>
        <taxon>Metazoa</taxon>
        <taxon>Chordata</taxon>
        <taxon>Craniata</taxon>
        <taxon>Vertebrata</taxon>
        <taxon>Euteleostomi</taxon>
        <taxon>Mammalia</taxon>
        <taxon>Eutheria</taxon>
        <taxon>Laurasiatheria</taxon>
        <taxon>Artiodactyla</taxon>
        <taxon>Ruminantia</taxon>
        <taxon>Pecora</taxon>
        <taxon>Bovidae</taxon>
        <taxon>Bovinae</taxon>
        <taxon>Bos</taxon>
    </lineage>
</organism>
<keyword id="KW-0156">Chromatin regulator</keyword>
<keyword id="KW-0227">DNA damage</keyword>
<keyword id="KW-0234">DNA repair</keyword>
<keyword id="KW-0488">Methylation</keyword>
<keyword id="KW-0489">Methyltransferase</keyword>
<keyword id="KW-0539">Nucleus</keyword>
<keyword id="KW-0597">Phosphoprotein</keyword>
<keyword id="KW-1185">Reference proteome</keyword>
<keyword id="KW-0678">Repressor</keyword>
<keyword id="KW-0949">S-adenosyl-L-methionine</keyword>
<keyword id="KW-0804">Transcription</keyword>
<keyword id="KW-0805">Transcription regulation</keyword>
<keyword id="KW-0808">Transferase</keyword>
<feature type="chain" id="PRO_0000212331" description="Protein arginine N-methyltransferase 6">
    <location>
        <begin position="1"/>
        <end position="375"/>
    </location>
</feature>
<feature type="domain" description="SAM-dependent MTase PRMT-type" evidence="4">
    <location>
        <begin position="44"/>
        <end position="374"/>
    </location>
</feature>
<feature type="region of interest" description="Disordered" evidence="5">
    <location>
        <begin position="1"/>
        <end position="36"/>
    </location>
</feature>
<feature type="compositionally biased region" description="Acidic residues" evidence="5">
    <location>
        <begin position="19"/>
        <end position="28"/>
    </location>
</feature>
<feature type="active site" evidence="1">
    <location>
        <position position="155"/>
    </location>
</feature>
<feature type="active site" evidence="1">
    <location>
        <position position="164"/>
    </location>
</feature>
<feature type="binding site" evidence="1">
    <location>
        <position position="57"/>
    </location>
    <ligand>
        <name>S-adenosyl-L-methionine</name>
        <dbReference type="ChEBI" id="CHEBI:59789"/>
    </ligand>
</feature>
<feature type="binding site" evidence="1">
    <location>
        <position position="66"/>
    </location>
    <ligand>
        <name>S-adenosyl-L-methionine</name>
        <dbReference type="ChEBI" id="CHEBI:59789"/>
    </ligand>
</feature>
<feature type="binding site" evidence="1">
    <location>
        <position position="90"/>
    </location>
    <ligand>
        <name>S-adenosyl-L-methionine</name>
        <dbReference type="ChEBI" id="CHEBI:59789"/>
    </ligand>
</feature>
<feature type="binding site" evidence="1">
    <location>
        <position position="112"/>
    </location>
    <ligand>
        <name>S-adenosyl-L-methionine</name>
        <dbReference type="ChEBI" id="CHEBI:59789"/>
    </ligand>
</feature>
<feature type="binding site" evidence="1">
    <location>
        <position position="141"/>
    </location>
    <ligand>
        <name>S-adenosyl-L-methionine</name>
        <dbReference type="ChEBI" id="CHEBI:59789"/>
    </ligand>
</feature>
<feature type="modified residue" description="Phosphothreonine" evidence="3">
    <location>
        <position position="21"/>
    </location>
</feature>
<feature type="modified residue" description="Asymmetric dimethylarginine; by autocatalysis" evidence="1">
    <location>
        <position position="38"/>
    </location>
</feature>
<name>ANM6_BOVIN</name>
<sequence length="375" mass="41868">MSQPKRRKLESGGGGEGGEGTEEEDGGELEVAVPRPRRTRRERDQLYYQCYSDVSVHEEMIADRVRTDAYRLGILRNWAALRGKTVLDVGAGTGILSIFCAQAGARRVYAVEASDIWQQAREVVRLNGLEDRVHVLPGPVETVELPEQVDAIVSEWMGCGLLHESMLSSVLHARTKWLKEGGLLLPASAELFVAPISDQMLELRLSFWSQMKQLYGVDMSCLESFATRCLMGHSEIVVQGLSGEDVLARPQCFARLELARAGLEQELEAGVGGRFRFSCYGSAPMHGFAIWFQVTFPGGDSEKPVVLSTSPFHPVTHWKQALLYLNEPVQVEQDTDVSGEITLLPSQDHHRHLRVLLRYKVGDQEEKTKDFAMED</sequence>
<dbReference type="EC" id="2.1.1.319" evidence="3"/>
<dbReference type="EMBL" id="BT020905">
    <property type="protein sequence ID" value="AAX08922.1"/>
    <property type="molecule type" value="mRNA"/>
</dbReference>
<dbReference type="RefSeq" id="NP_001014962.1">
    <property type="nucleotide sequence ID" value="NM_001014962.1"/>
</dbReference>
<dbReference type="SMR" id="Q5E9L5"/>
<dbReference type="FunCoup" id="Q5E9L5">
    <property type="interactions" value="2579"/>
</dbReference>
<dbReference type="STRING" id="9913.ENSBTAP00000009750"/>
<dbReference type="PaxDb" id="9913-ENSBTAP00000009750"/>
<dbReference type="Ensembl" id="ENSBTAT00000009750.6">
    <property type="protein sequence ID" value="ENSBTAP00000009750.4"/>
    <property type="gene ID" value="ENSBTAG00000039951.3"/>
</dbReference>
<dbReference type="Ensembl" id="ENSBTAT00000094407.1">
    <property type="protein sequence ID" value="ENSBTAP00000094865.1"/>
    <property type="gene ID" value="ENSBTAG00000039951.3"/>
</dbReference>
<dbReference type="GeneID" id="540228"/>
<dbReference type="KEGG" id="bta:540228"/>
<dbReference type="CTD" id="55170"/>
<dbReference type="VEuPathDB" id="HostDB:ENSBTAG00000039951"/>
<dbReference type="VGNC" id="VGNC:33351">
    <property type="gene designation" value="PRMT6"/>
</dbReference>
<dbReference type="eggNOG" id="KOG1499">
    <property type="taxonomic scope" value="Eukaryota"/>
</dbReference>
<dbReference type="GeneTree" id="ENSGT00940000160961"/>
<dbReference type="HOGENOM" id="CLU_017375_1_2_1"/>
<dbReference type="InParanoid" id="Q5E9L5"/>
<dbReference type="OMA" id="CIHVDYT"/>
<dbReference type="OrthoDB" id="7848332at2759"/>
<dbReference type="TreeFam" id="TF328817"/>
<dbReference type="Reactome" id="R-BTA-3214858">
    <property type="pathway name" value="RMTs methylate histone arginines"/>
</dbReference>
<dbReference type="Reactome" id="R-BTA-8936459">
    <property type="pathway name" value="RUNX1 regulates genes involved in megakaryocyte differentiation and platelet function"/>
</dbReference>
<dbReference type="Proteomes" id="UP000009136">
    <property type="component" value="Chromosome 3"/>
</dbReference>
<dbReference type="Bgee" id="ENSBTAG00000039951">
    <property type="expression patterns" value="Expressed in retina and 107 other cell types or tissues"/>
</dbReference>
<dbReference type="GO" id="GO:0005730">
    <property type="term" value="C:nucleolus"/>
    <property type="evidence" value="ECO:0007669"/>
    <property type="project" value="Ensembl"/>
</dbReference>
<dbReference type="GO" id="GO:0005654">
    <property type="term" value="C:nucleoplasm"/>
    <property type="evidence" value="ECO:0007669"/>
    <property type="project" value="Ensembl"/>
</dbReference>
<dbReference type="GO" id="GO:0005634">
    <property type="term" value="C:nucleus"/>
    <property type="evidence" value="ECO:0000250"/>
    <property type="project" value="UniProtKB"/>
</dbReference>
<dbReference type="GO" id="GO:0003682">
    <property type="term" value="F:chromatin binding"/>
    <property type="evidence" value="ECO:0007669"/>
    <property type="project" value="Ensembl"/>
</dbReference>
<dbReference type="GO" id="GO:0008469">
    <property type="term" value="F:histone arginine N-methyltransferase activity"/>
    <property type="evidence" value="ECO:0007669"/>
    <property type="project" value="Ensembl"/>
</dbReference>
<dbReference type="GO" id="GO:0042393">
    <property type="term" value="F:histone binding"/>
    <property type="evidence" value="ECO:0000250"/>
    <property type="project" value="UniProtKB"/>
</dbReference>
<dbReference type="GO" id="GO:0070612">
    <property type="term" value="F:histone H2AR3 methyltransferase activity"/>
    <property type="evidence" value="ECO:0000250"/>
    <property type="project" value="UniProtKB"/>
</dbReference>
<dbReference type="GO" id="GO:0070611">
    <property type="term" value="F:histone H3R2 methyltransferase activity"/>
    <property type="evidence" value="ECO:0000250"/>
    <property type="project" value="UniProtKB"/>
</dbReference>
<dbReference type="GO" id="GO:0044020">
    <property type="term" value="F:histone H4R3 methyltransferase activity"/>
    <property type="evidence" value="ECO:0000250"/>
    <property type="project" value="UniProtKB"/>
</dbReference>
<dbReference type="GO" id="GO:0042054">
    <property type="term" value="F:histone methyltransferase activity"/>
    <property type="evidence" value="ECO:0000250"/>
    <property type="project" value="UniProtKB"/>
</dbReference>
<dbReference type="GO" id="GO:0016274">
    <property type="term" value="F:protein-arginine N-methyltransferase activity"/>
    <property type="evidence" value="ECO:0000250"/>
    <property type="project" value="UniProtKB"/>
</dbReference>
<dbReference type="GO" id="GO:0035242">
    <property type="term" value="F:protein-arginine omega-N asymmetric methyltransferase activity"/>
    <property type="evidence" value="ECO:0000250"/>
    <property type="project" value="UniProtKB"/>
</dbReference>
<dbReference type="GO" id="GO:0035241">
    <property type="term" value="F:protein-arginine omega-N monomethyltransferase activity"/>
    <property type="evidence" value="ECO:0000250"/>
    <property type="project" value="UniProtKB"/>
</dbReference>
<dbReference type="GO" id="GO:0090398">
    <property type="term" value="P:cellular senescence"/>
    <property type="evidence" value="ECO:0007669"/>
    <property type="project" value="Ensembl"/>
</dbReference>
<dbReference type="GO" id="GO:0006338">
    <property type="term" value="P:chromatin remodeling"/>
    <property type="evidence" value="ECO:0000318"/>
    <property type="project" value="GO_Central"/>
</dbReference>
<dbReference type="GO" id="GO:0006281">
    <property type="term" value="P:DNA repair"/>
    <property type="evidence" value="ECO:0007669"/>
    <property type="project" value="UniProtKB-KW"/>
</dbReference>
<dbReference type="GO" id="GO:0032259">
    <property type="term" value="P:methylation"/>
    <property type="evidence" value="ECO:0007669"/>
    <property type="project" value="UniProtKB-KW"/>
</dbReference>
<dbReference type="GO" id="GO:0045892">
    <property type="term" value="P:negative regulation of DNA-templated transcription"/>
    <property type="evidence" value="ECO:0000250"/>
    <property type="project" value="UniProtKB"/>
</dbReference>
<dbReference type="GO" id="GO:0000122">
    <property type="term" value="P:negative regulation of transcription by RNA polymerase II"/>
    <property type="evidence" value="ECO:0007669"/>
    <property type="project" value="Ensembl"/>
</dbReference>
<dbReference type="GO" id="GO:2000059">
    <property type="term" value="P:negative regulation of ubiquitin-dependent protein catabolic process"/>
    <property type="evidence" value="ECO:0000250"/>
    <property type="project" value="UniProtKB"/>
</dbReference>
<dbReference type="GO" id="GO:0036211">
    <property type="term" value="P:protein modification process"/>
    <property type="evidence" value="ECO:0007669"/>
    <property type="project" value="Ensembl"/>
</dbReference>
<dbReference type="GO" id="GO:0006355">
    <property type="term" value="P:regulation of DNA-templated transcription"/>
    <property type="evidence" value="ECO:0000318"/>
    <property type="project" value="GO_Central"/>
</dbReference>
<dbReference type="GO" id="GO:0010821">
    <property type="term" value="P:regulation of mitochondrion organization"/>
    <property type="evidence" value="ECO:0000250"/>
    <property type="project" value="UniProtKB"/>
</dbReference>
<dbReference type="GO" id="GO:1901796">
    <property type="term" value="P:regulation of signal transduction by p53 class mediator"/>
    <property type="evidence" value="ECO:0007669"/>
    <property type="project" value="Ensembl"/>
</dbReference>
<dbReference type="CDD" id="cd02440">
    <property type="entry name" value="AdoMet_MTases"/>
    <property type="match status" value="1"/>
</dbReference>
<dbReference type="FunFam" id="3.40.50.150:FF:000016">
    <property type="entry name" value="Protein arginine N-methyltransferase 6"/>
    <property type="match status" value="1"/>
</dbReference>
<dbReference type="FunFam" id="2.70.160.11:FF:000009">
    <property type="entry name" value="protein arginine N-methyltransferase 6"/>
    <property type="match status" value="1"/>
</dbReference>
<dbReference type="Gene3D" id="2.70.160.11">
    <property type="entry name" value="Hnrnp arginine n-methyltransferase1"/>
    <property type="match status" value="1"/>
</dbReference>
<dbReference type="Gene3D" id="3.40.50.150">
    <property type="entry name" value="Vaccinia Virus protein VP39"/>
    <property type="match status" value="1"/>
</dbReference>
<dbReference type="InterPro" id="IPR025799">
    <property type="entry name" value="Arg_MeTrfase"/>
</dbReference>
<dbReference type="InterPro" id="IPR041698">
    <property type="entry name" value="Methyltransf_25"/>
</dbReference>
<dbReference type="InterPro" id="IPR055135">
    <property type="entry name" value="PRMT_dom"/>
</dbReference>
<dbReference type="InterPro" id="IPR029063">
    <property type="entry name" value="SAM-dependent_MTases_sf"/>
</dbReference>
<dbReference type="PANTHER" id="PTHR11006">
    <property type="entry name" value="PROTEIN ARGININE N-METHYLTRANSFERASE"/>
    <property type="match status" value="1"/>
</dbReference>
<dbReference type="PANTHER" id="PTHR11006:SF73">
    <property type="entry name" value="PROTEIN ARGININE N-METHYLTRANSFERASE 6"/>
    <property type="match status" value="1"/>
</dbReference>
<dbReference type="Pfam" id="PF13649">
    <property type="entry name" value="Methyltransf_25"/>
    <property type="match status" value="1"/>
</dbReference>
<dbReference type="Pfam" id="PF22528">
    <property type="entry name" value="PRMT_C"/>
    <property type="match status" value="1"/>
</dbReference>
<dbReference type="SUPFAM" id="SSF53335">
    <property type="entry name" value="S-adenosyl-L-methionine-dependent methyltransferases"/>
    <property type="match status" value="1"/>
</dbReference>
<dbReference type="PROSITE" id="PS51678">
    <property type="entry name" value="SAM_MT_PRMT"/>
    <property type="match status" value="1"/>
</dbReference>
<evidence type="ECO:0000250" key="1"/>
<evidence type="ECO:0000250" key="2">
    <source>
        <dbReference type="UniProtKB" id="Q6NZB1"/>
    </source>
</evidence>
<evidence type="ECO:0000250" key="3">
    <source>
        <dbReference type="UniProtKB" id="Q96LA8"/>
    </source>
</evidence>
<evidence type="ECO:0000255" key="4">
    <source>
        <dbReference type="PROSITE-ProRule" id="PRU01015"/>
    </source>
</evidence>
<evidence type="ECO:0000256" key="5">
    <source>
        <dbReference type="SAM" id="MobiDB-lite"/>
    </source>
</evidence>
<gene>
    <name type="primary">PRMT6</name>
    <name type="synonym">HRMT1L6</name>
</gene>
<accession>Q5E9L5</accession>
<proteinExistence type="evidence at transcript level"/>
<comment type="function">
    <text evidence="2 3">Arginine methyltransferase that can catalyze the formation of both omega-N monomethylarginine (MMA) and asymmetrical dimethylarginine (aDMA), with a strong preference for the formation of aDMA. Preferentially methylates arginyl residues present in a glycine and arginine-rich domain and displays preference for monomethylated substrates. Specifically mediates the asymmetric dimethylation of histone H3 'Arg-2' to form H3R2me2a. H3R2me2a represents a specific tag for epigenetic transcriptional repression and is mutually exclusive with methylation on histone H3 'Lys-4' (H3K4me2 and H3K4me3). Acts as a transcriptional repressor of various genes such as HOXA2, THBS1 and TP53 (By similarity). Repression of TP53 blocks cellular senescence (By similarity). Also methylates histone H2A and H4 'Arg-3' (H2AR3me and H4R3me, respectively). Acts as a regulator of DNA base excision during DNA repair by mediating the methylation of DNA polymerase beta (POLB), leading to the stimulation of its polymerase activity by enhancing DNA binding and processivity. Methylates HMGA1. Regulates alternative splicing events. Acts as a transcriptional coactivator of a number of steroid hormone receptors including ESR1, ESR2, PGR and NR3C1. Promotes fasting-induced transcriptional activation of the gluconeogenic program through methylation of the CRTC2 transcription coactivator. Methylates GPS2, protecting GPS2 from ubiquitination and degradation. Methylates SIRT7, inhibiting SIRT7 histone deacetylase activity and promoting mitochondria biogenesis (By similarity).</text>
</comment>
<comment type="catalytic activity">
    <reaction evidence="3">
        <text>L-arginyl-[protein] + 2 S-adenosyl-L-methionine = N(omega),N(omega)-dimethyl-L-arginyl-[protein] + 2 S-adenosyl-L-homocysteine + 2 H(+)</text>
        <dbReference type="Rhea" id="RHEA:48096"/>
        <dbReference type="Rhea" id="RHEA-COMP:10532"/>
        <dbReference type="Rhea" id="RHEA-COMP:11991"/>
        <dbReference type="ChEBI" id="CHEBI:15378"/>
        <dbReference type="ChEBI" id="CHEBI:29965"/>
        <dbReference type="ChEBI" id="CHEBI:57856"/>
        <dbReference type="ChEBI" id="CHEBI:59789"/>
        <dbReference type="ChEBI" id="CHEBI:61897"/>
        <dbReference type="EC" id="2.1.1.319"/>
    </reaction>
</comment>
<comment type="subunit">
    <text evidence="3">Interacts with (and methylates) HIV-1 Tat, Rev and Nucleocapsid protein p7 (NC). Interacts with EPB41L3 and NCOA1.</text>
</comment>
<comment type="subcellular location">
    <subcellularLocation>
        <location evidence="3">Nucleus</location>
    </subcellularLocation>
</comment>
<comment type="PTM">
    <text evidence="1">Automethylation enhances its stability.</text>
</comment>
<comment type="similarity">
    <text evidence="4">Belongs to the class I-like SAM-binding methyltransferase superfamily. Protein arginine N-methyltransferase family. PRMT6 subfamily.</text>
</comment>
<reference key="1">
    <citation type="journal article" date="2005" name="BMC Genomics">
        <title>Characterization of 954 bovine full-CDS cDNA sequences.</title>
        <authorList>
            <person name="Harhay G.P."/>
            <person name="Sonstegard T.S."/>
            <person name="Keele J.W."/>
            <person name="Heaton M.P."/>
            <person name="Clawson M.L."/>
            <person name="Snelling W.M."/>
            <person name="Wiedmann R.T."/>
            <person name="Van Tassell C.P."/>
            <person name="Smith T.P.L."/>
        </authorList>
    </citation>
    <scope>NUCLEOTIDE SEQUENCE [LARGE SCALE MRNA]</scope>
</reference>
<protein>
    <recommendedName>
        <fullName>Protein arginine N-methyltransferase 6</fullName>
        <ecNumber evidence="3">2.1.1.319</ecNumber>
    </recommendedName>
    <alternativeName>
        <fullName>Histone-arginine N-methyltransferase PRMT6</fullName>
    </alternativeName>
</protein>